<protein>
    <recommendedName>
        <fullName>Glutathione synthetase, chloroplastic</fullName>
        <shortName>GSH synthetase</shortName>
        <shortName>GSH-S</shortName>
        <shortName>Glutathione synthase</shortName>
        <ecNumber>6.3.2.3</ecNumber>
    </recommendedName>
</protein>
<comment type="catalytic activity">
    <reaction>
        <text>gamma-L-glutamyl-L-cysteine + glycine + ATP = glutathione + ADP + phosphate + H(+)</text>
        <dbReference type="Rhea" id="RHEA:13557"/>
        <dbReference type="ChEBI" id="CHEBI:15378"/>
        <dbReference type="ChEBI" id="CHEBI:30616"/>
        <dbReference type="ChEBI" id="CHEBI:43474"/>
        <dbReference type="ChEBI" id="CHEBI:57305"/>
        <dbReference type="ChEBI" id="CHEBI:57925"/>
        <dbReference type="ChEBI" id="CHEBI:58173"/>
        <dbReference type="ChEBI" id="CHEBI:456216"/>
        <dbReference type="EC" id="6.3.2.3"/>
    </reaction>
</comment>
<comment type="cofactor">
    <cofactor evidence="1">
        <name>Mg(2+)</name>
        <dbReference type="ChEBI" id="CHEBI:18420"/>
    </cofactor>
    <text evidence="1">Binds 1 Mg(2+) ion per subunit.</text>
</comment>
<comment type="pathway">
    <text>Sulfur metabolism; glutathione biosynthesis; glutathione from L-cysteine and L-glutamate: step 2/2.</text>
</comment>
<comment type="subunit">
    <text evidence="1">Homodimer.</text>
</comment>
<comment type="subcellular location">
    <subcellularLocation>
        <location>Plastid</location>
        <location>Chloroplast</location>
    </subcellularLocation>
</comment>
<comment type="similarity">
    <text evidence="3">Belongs to the eukaryotic GSH synthase family.</text>
</comment>
<comment type="sequence caution" evidence="3">
    <conflict type="erroneous initiation">
        <sequence resource="EMBL-CDS" id="AAA64781"/>
    </conflict>
</comment>
<comment type="sequence caution" evidence="3">
    <conflict type="frameshift">
        <sequence resource="EMBL-CDS" id="AAA99146"/>
    </conflict>
</comment>
<comment type="sequence caution" evidence="3">
    <conflict type="erroneous initiation">
        <sequence resource="EMBL-CDS" id="AAL11580"/>
    </conflict>
</comment>
<comment type="sequence caution" evidence="3">
    <conflict type="erroneous initiation">
        <sequence resource="EMBL-CDS" id="CAA58318"/>
    </conflict>
</comment>
<name>GSHB_ARATH</name>
<reference key="1">
    <citation type="journal article" date="1996" name="Plant Mol. Biol.">
        <title>Cloning of the cDNA and genomic clones for glutathione synthetase from Arabidopsis thaliana and complementation of a gsh2 mutant in fission yeast.</title>
        <authorList>
            <person name="Wang C.L."/>
            <person name="Oliver D.J."/>
        </authorList>
    </citation>
    <scope>NUCLEOTIDE SEQUENCE [GENOMIC DNA / MRNA]</scope>
    <source>
        <strain>cv. RLD</strain>
    </source>
</reference>
<reference key="2">
    <citation type="online journal article" date="1999" name="Plant Gene Register">
        <title>Isolation of cDNA and genomic clones of glutathione synthetase containing plastidic targeting sequences from Arabidopsis thaliana.</title>
        <authorList>
            <person name="Skipsey M."/>
            <person name="Andrews C.J."/>
            <person name="Townson J.K."/>
            <person name="Jepson I."/>
            <person name="Edwards R."/>
        </authorList>
        <locator>PGR99-137</locator>
    </citation>
    <scope>NUCLEOTIDE SEQUENCE [GENOMIC DNA / MRNA]</scope>
    <source>
        <strain>cv. Columbia</strain>
    </source>
</reference>
<reference key="3">
    <citation type="journal article" date="2000" name="Nature">
        <title>Sequence and analysis of chromosome 5 of the plant Arabidopsis thaliana.</title>
        <authorList>
            <person name="Tabata S."/>
            <person name="Kaneko T."/>
            <person name="Nakamura Y."/>
            <person name="Kotani H."/>
            <person name="Kato T."/>
            <person name="Asamizu E."/>
            <person name="Miyajima N."/>
            <person name="Sasamoto S."/>
            <person name="Kimura T."/>
            <person name="Hosouchi T."/>
            <person name="Kawashima K."/>
            <person name="Kohara M."/>
            <person name="Matsumoto M."/>
            <person name="Matsuno A."/>
            <person name="Muraki A."/>
            <person name="Nakayama S."/>
            <person name="Nakazaki N."/>
            <person name="Naruo K."/>
            <person name="Okumura S."/>
            <person name="Shinpo S."/>
            <person name="Takeuchi C."/>
            <person name="Wada T."/>
            <person name="Watanabe A."/>
            <person name="Yamada M."/>
            <person name="Yasuda M."/>
            <person name="Sato S."/>
            <person name="de la Bastide M."/>
            <person name="Huang E."/>
            <person name="Spiegel L."/>
            <person name="Gnoj L."/>
            <person name="O'Shaughnessy A."/>
            <person name="Preston R."/>
            <person name="Habermann K."/>
            <person name="Murray J."/>
            <person name="Johnson D."/>
            <person name="Rohlfing T."/>
            <person name="Nelson J."/>
            <person name="Stoneking T."/>
            <person name="Pepin K."/>
            <person name="Spieth J."/>
            <person name="Sekhon M."/>
            <person name="Armstrong J."/>
            <person name="Becker M."/>
            <person name="Belter E."/>
            <person name="Cordum H."/>
            <person name="Cordes M."/>
            <person name="Courtney L."/>
            <person name="Courtney W."/>
            <person name="Dante M."/>
            <person name="Du H."/>
            <person name="Edwards J."/>
            <person name="Fryman J."/>
            <person name="Haakensen B."/>
            <person name="Lamar E."/>
            <person name="Latreille P."/>
            <person name="Leonard S."/>
            <person name="Meyer R."/>
            <person name="Mulvaney E."/>
            <person name="Ozersky P."/>
            <person name="Riley A."/>
            <person name="Strowmatt C."/>
            <person name="Wagner-McPherson C."/>
            <person name="Wollam A."/>
            <person name="Yoakum M."/>
            <person name="Bell M."/>
            <person name="Dedhia N."/>
            <person name="Parnell L."/>
            <person name="Shah R."/>
            <person name="Rodriguez M."/>
            <person name="Hoon See L."/>
            <person name="Vil D."/>
            <person name="Baker J."/>
            <person name="Kirchoff K."/>
            <person name="Toth K."/>
            <person name="King L."/>
            <person name="Bahret A."/>
            <person name="Miller B."/>
            <person name="Marra M.A."/>
            <person name="Martienssen R."/>
            <person name="McCombie W.R."/>
            <person name="Wilson R.K."/>
            <person name="Murphy G."/>
            <person name="Bancroft I."/>
            <person name="Volckaert G."/>
            <person name="Wambutt R."/>
            <person name="Duesterhoeft A."/>
            <person name="Stiekema W."/>
            <person name="Pohl T."/>
            <person name="Entian K.-D."/>
            <person name="Terryn N."/>
            <person name="Hartley N."/>
            <person name="Bent E."/>
            <person name="Johnson S."/>
            <person name="Langham S.-A."/>
            <person name="McCullagh B."/>
            <person name="Robben J."/>
            <person name="Grymonprez B."/>
            <person name="Zimmermann W."/>
            <person name="Ramsperger U."/>
            <person name="Wedler H."/>
            <person name="Balke K."/>
            <person name="Wedler E."/>
            <person name="Peters S."/>
            <person name="van Staveren M."/>
            <person name="Dirkse W."/>
            <person name="Mooijman P."/>
            <person name="Klein Lankhorst R."/>
            <person name="Weitzenegger T."/>
            <person name="Bothe G."/>
            <person name="Rose M."/>
            <person name="Hauf J."/>
            <person name="Berneiser S."/>
            <person name="Hempel S."/>
            <person name="Feldpausch M."/>
            <person name="Lamberth S."/>
            <person name="Villarroel R."/>
            <person name="Gielen J."/>
            <person name="Ardiles W."/>
            <person name="Bents O."/>
            <person name="Lemcke K."/>
            <person name="Kolesov G."/>
            <person name="Mayer K.F.X."/>
            <person name="Rudd S."/>
            <person name="Schoof H."/>
            <person name="Schueller C."/>
            <person name="Zaccaria P."/>
            <person name="Mewes H.-W."/>
            <person name="Bevan M."/>
            <person name="Fransz P.F."/>
        </authorList>
    </citation>
    <scope>NUCLEOTIDE SEQUENCE [LARGE SCALE GENOMIC DNA]</scope>
    <source>
        <strain>cv. Columbia</strain>
    </source>
</reference>
<reference key="4">
    <citation type="journal article" date="2017" name="Plant J.">
        <title>Araport11: a complete reannotation of the Arabidopsis thaliana reference genome.</title>
        <authorList>
            <person name="Cheng C.Y."/>
            <person name="Krishnakumar V."/>
            <person name="Chan A.P."/>
            <person name="Thibaud-Nissen F."/>
            <person name="Schobel S."/>
            <person name="Town C.D."/>
        </authorList>
    </citation>
    <scope>GENOME REANNOTATION</scope>
    <source>
        <strain>cv. Columbia</strain>
    </source>
</reference>
<reference key="5">
    <citation type="journal article" date="1995" name="FEBS Lett.">
        <title>Characterisation of an Arabidopsis thaliana cDNA encoding glutathione synthetase.</title>
        <authorList>
            <person name="Rawlins M.R."/>
            <person name="Leaver C.J."/>
            <person name="May M.J."/>
        </authorList>
    </citation>
    <scope>NUCLEOTIDE SEQUENCE [MRNA] OF 30-539</scope>
    <source>
        <strain>cv. C24</strain>
    </source>
</reference>
<reference key="6">
    <citation type="journal article" date="1996" name="Eur. J. Biochem.">
        <title>Cloning of Arabidopsis thaliana glutathione synthetase (GSH2) by functional complementation of a yeast gsh2 mutant.</title>
        <authorList>
            <person name="Ullmann P."/>
            <person name="Gondet L."/>
            <person name="Potier S."/>
            <person name="Bach T.J."/>
        </authorList>
    </citation>
    <scope>NUCLEOTIDE SEQUENCE [MRNA] OF 41-539</scope>
    <source>
        <strain>cv. Landsberg erecta</strain>
    </source>
</reference>
<reference key="7">
    <citation type="journal article" date="2003" name="Science">
        <title>Empirical analysis of transcriptional activity in the Arabidopsis genome.</title>
        <authorList>
            <person name="Yamada K."/>
            <person name="Lim J."/>
            <person name="Dale J.M."/>
            <person name="Chen H."/>
            <person name="Shinn P."/>
            <person name="Palm C.J."/>
            <person name="Southwick A.M."/>
            <person name="Wu H.C."/>
            <person name="Kim C.J."/>
            <person name="Nguyen M."/>
            <person name="Pham P.K."/>
            <person name="Cheuk R.F."/>
            <person name="Karlin-Newmann G."/>
            <person name="Liu S.X."/>
            <person name="Lam B."/>
            <person name="Sakano H."/>
            <person name="Wu T."/>
            <person name="Yu G."/>
            <person name="Miranda M."/>
            <person name="Quach H.L."/>
            <person name="Tripp M."/>
            <person name="Chang C.H."/>
            <person name="Lee J.M."/>
            <person name="Toriumi M.J."/>
            <person name="Chan M.M."/>
            <person name="Tang C.C."/>
            <person name="Onodera C.S."/>
            <person name="Deng J.M."/>
            <person name="Akiyama K."/>
            <person name="Ansari Y."/>
            <person name="Arakawa T."/>
            <person name="Banh J."/>
            <person name="Banno F."/>
            <person name="Bowser L."/>
            <person name="Brooks S.Y."/>
            <person name="Carninci P."/>
            <person name="Chao Q."/>
            <person name="Choy N."/>
            <person name="Enju A."/>
            <person name="Goldsmith A.D."/>
            <person name="Gurjal M."/>
            <person name="Hansen N.F."/>
            <person name="Hayashizaki Y."/>
            <person name="Johnson-Hopson C."/>
            <person name="Hsuan V.W."/>
            <person name="Iida K."/>
            <person name="Karnes M."/>
            <person name="Khan S."/>
            <person name="Koesema E."/>
            <person name="Ishida J."/>
            <person name="Jiang P.X."/>
            <person name="Jones T."/>
            <person name="Kawai J."/>
            <person name="Kamiya A."/>
            <person name="Meyers C."/>
            <person name="Nakajima M."/>
            <person name="Narusaka M."/>
            <person name="Seki M."/>
            <person name="Sakurai T."/>
            <person name="Satou M."/>
            <person name="Tamse R."/>
            <person name="Vaysberg M."/>
            <person name="Wallender E.K."/>
            <person name="Wong C."/>
            <person name="Yamamura Y."/>
            <person name="Yuan S."/>
            <person name="Shinozaki K."/>
            <person name="Davis R.W."/>
            <person name="Theologis A."/>
            <person name="Ecker J.R."/>
        </authorList>
    </citation>
    <scope>NUCLEOTIDE SEQUENCE [LARGE SCALE MRNA] OF 20-539</scope>
    <source>
        <strain>cv. Columbia</strain>
    </source>
</reference>
<feature type="transit peptide" description="Chloroplast" evidence="2">
    <location>
        <begin position="1"/>
        <end position="61"/>
    </location>
</feature>
<feature type="chain" id="PRO_0000013058" description="Glutathione synthetase, chloroplastic">
    <location>
        <begin position="62"/>
        <end position="539"/>
    </location>
</feature>
<feature type="binding site" evidence="1">
    <location>
        <position position="193"/>
    </location>
    <ligand>
        <name>substrate</name>
    </ligand>
</feature>
<feature type="binding site" evidence="1">
    <location>
        <position position="209"/>
    </location>
    <ligand>
        <name>ATP</name>
        <dbReference type="ChEBI" id="CHEBI:30616"/>
    </ligand>
</feature>
<feature type="binding site" evidence="1">
    <location>
        <position position="209"/>
    </location>
    <ligand>
        <name>Mg(2+)</name>
        <dbReference type="ChEBI" id="CHEBI:18420"/>
    </ligand>
</feature>
<feature type="binding site" evidence="1">
    <location>
        <position position="211"/>
    </location>
    <ligand>
        <name>Mg(2+)</name>
        <dbReference type="ChEBI" id="CHEBI:18420"/>
    </ligand>
</feature>
<feature type="binding site" evidence="1">
    <location>
        <begin position="213"/>
        <end position="216"/>
    </location>
    <ligand>
        <name>substrate</name>
    </ligand>
</feature>
<feature type="binding site" evidence="1">
    <location>
        <begin position="281"/>
        <end position="283"/>
    </location>
    <ligand>
        <name>substrate</name>
    </ligand>
</feature>
<feature type="binding site" evidence="1">
    <location>
        <position position="287"/>
    </location>
    <ligand>
        <name>substrate</name>
    </ligand>
</feature>
<feature type="binding site" evidence="1">
    <location>
        <begin position="335"/>
        <end position="338"/>
    </location>
    <ligand>
        <name>substrate</name>
    </ligand>
</feature>
<feature type="binding site" evidence="1">
    <location>
        <position position="374"/>
    </location>
    <ligand>
        <name>ATP</name>
        <dbReference type="ChEBI" id="CHEBI:30616"/>
    </ligand>
</feature>
<feature type="binding site" evidence="1">
    <location>
        <begin position="428"/>
        <end position="437"/>
    </location>
    <ligand>
        <name>ATP</name>
        <dbReference type="ChEBI" id="CHEBI:30616"/>
    </ligand>
</feature>
<feature type="binding site" evidence="1">
    <location>
        <position position="432"/>
    </location>
    <ligand>
        <name>Mg(2+)</name>
        <dbReference type="ChEBI" id="CHEBI:18420"/>
    </ligand>
</feature>
<feature type="binding site" evidence="1">
    <location>
        <position position="439"/>
    </location>
    <ligand>
        <name>ATP</name>
        <dbReference type="ChEBI" id="CHEBI:30616"/>
    </ligand>
</feature>
<feature type="binding site" evidence="1">
    <location>
        <begin position="464"/>
        <end position="467"/>
    </location>
    <ligand>
        <name>ATP</name>
        <dbReference type="ChEBI" id="CHEBI:30616"/>
    </ligand>
</feature>
<feature type="binding site" evidence="1">
    <location>
        <position position="490"/>
    </location>
    <ligand>
        <name>ATP</name>
        <dbReference type="ChEBI" id="CHEBI:30616"/>
    </ligand>
</feature>
<feature type="binding site" evidence="1">
    <location>
        <position position="515"/>
    </location>
    <ligand>
        <name>substrate</name>
    </ligand>
</feature>
<feature type="binding site" evidence="1">
    <location>
        <position position="517"/>
    </location>
    <ligand>
        <name>ATP</name>
        <dbReference type="ChEBI" id="CHEBI:30616"/>
    </ligand>
</feature>
<feature type="binding site" evidence="1">
    <location>
        <position position="523"/>
    </location>
    <ligand>
        <name>ATP</name>
        <dbReference type="ChEBI" id="CHEBI:30616"/>
    </ligand>
</feature>
<feature type="binding site" evidence="1">
    <location>
        <begin position="526"/>
        <end position="527"/>
    </location>
    <ligand>
        <name>substrate</name>
    </ligand>
</feature>
<feature type="sequence conflict" description="In Ref. 2; CAB51026/CAB51027." evidence="3" ref="2">
    <original>N</original>
    <variation>S</variation>
    <location>
        <position position="17"/>
    </location>
</feature>
<feature type="sequence conflict" description="In Ref. 2; CAB51026/CAB51027." evidence="3" ref="2">
    <original>S</original>
    <variation>P</variation>
    <location>
        <position position="26"/>
    </location>
</feature>
<feature type="sequence conflict" description="In Ref. 5; CAA90515." evidence="3" ref="5">
    <original>SSSLK</original>
    <variation>ELRQG</variation>
    <location>
        <begin position="30"/>
        <end position="34"/>
    </location>
</feature>
<feature type="sequence conflict" description="In Ref. 2 and 6." evidence="3" ref="2 6">
    <original>S</original>
    <variation>P</variation>
    <location>
        <position position="52"/>
    </location>
</feature>
<feature type="sequence conflict" description="In Ref. 6; CAA58318." evidence="3" ref="6">
    <original>V</original>
    <variation>G</variation>
    <location>
        <position position="96"/>
    </location>
</feature>
<feature type="sequence conflict" description="In Ref. 2 and 6." evidence="3" ref="2 6">
    <original>S</original>
    <variation>T</variation>
    <location>
        <position position="101"/>
    </location>
</feature>
<feature type="sequence conflict" description="In Ref. 2 and 6." evidence="3" ref="2 6">
    <original>A</original>
    <variation>G</variation>
    <location>
        <position position="124"/>
    </location>
</feature>
<feature type="sequence conflict" description="In Ref. 2 and 6." evidence="3" ref="2 6">
    <original>N</original>
    <variation>D</variation>
    <location>
        <position position="135"/>
    </location>
</feature>
<feature type="sequence conflict" description="In Ref. 2; CAB51027." evidence="3" ref="2">
    <original>G</original>
    <variation>S</variation>
    <location>
        <position position="151"/>
    </location>
</feature>
<feature type="sequence conflict" description="In Ref. 2; CAB51027." evidence="3" ref="2">
    <original>D</original>
    <variation>G</variation>
    <location>
        <position position="199"/>
    </location>
</feature>
<feature type="sequence conflict" description="In Ref. 6; CAA58318." evidence="3" ref="6">
    <original>G</original>
    <variation>A</variation>
    <location>
        <position position="219"/>
    </location>
</feature>
<feature type="sequence conflict" description="In Ref. 2; CAB51027." evidence="3" ref="2">
    <original>I</original>
    <variation>T</variation>
    <location>
        <position position="438"/>
    </location>
</feature>
<feature type="sequence conflict" description="In Ref. 2; CAB51027." evidence="3" ref="2">
    <original>I</original>
    <variation>M</variation>
    <location>
        <position position="488"/>
    </location>
</feature>
<feature type="sequence conflict" description="In Ref. 2 and 6." evidence="3" ref="2 6">
    <original>E</original>
    <variation>K</variation>
    <location>
        <position position="503"/>
    </location>
</feature>
<feature type="sequence conflict" description="In Ref. 2 and 6." evidence="3" ref="2 6">
    <original>I</original>
    <variation>N</variation>
    <location>
        <position position="539"/>
    </location>
</feature>
<accession>P46416</accession>
<accession>Q8H171</accession>
<accession>Q9SMW4</accession>
<accession>Q9SMW5</accession>
<dbReference type="EC" id="6.3.2.3"/>
<dbReference type="EMBL" id="U22359">
    <property type="protein sequence ID" value="AAA64781.1"/>
    <property type="status" value="ALT_INIT"/>
    <property type="molecule type" value="mRNA"/>
</dbReference>
<dbReference type="EMBL" id="U53856">
    <property type="protein sequence ID" value="AAA99146.1"/>
    <property type="status" value="ALT_FRAME"/>
    <property type="molecule type" value="Genomic_DNA"/>
</dbReference>
<dbReference type="EMBL" id="AJ243812">
    <property type="protein sequence ID" value="CAB51026.1"/>
    <property type="molecule type" value="Genomic_DNA"/>
</dbReference>
<dbReference type="EMBL" id="AJ243813">
    <property type="protein sequence ID" value="CAB51027.1"/>
    <property type="molecule type" value="mRNA"/>
</dbReference>
<dbReference type="EMBL" id="AC007123">
    <property type="status" value="NOT_ANNOTATED_CDS"/>
    <property type="molecule type" value="Genomic_DNA"/>
</dbReference>
<dbReference type="EMBL" id="CP002688">
    <property type="protein sequence ID" value="AED93678.1"/>
    <property type="molecule type" value="Genomic_DNA"/>
</dbReference>
<dbReference type="EMBL" id="Z50153">
    <property type="protein sequence ID" value="CAA90515.1"/>
    <property type="molecule type" value="mRNA"/>
</dbReference>
<dbReference type="EMBL" id="X83411">
    <property type="protein sequence ID" value="CAA58318.1"/>
    <property type="status" value="ALT_INIT"/>
    <property type="molecule type" value="mRNA"/>
</dbReference>
<dbReference type="EMBL" id="AF424586">
    <property type="protein sequence ID" value="AAL11580.1"/>
    <property type="status" value="ALT_INIT"/>
    <property type="molecule type" value="mRNA"/>
</dbReference>
<dbReference type="EMBL" id="BT000624">
    <property type="protein sequence ID" value="AAN18190.1"/>
    <property type="molecule type" value="mRNA"/>
</dbReference>
<dbReference type="PIR" id="S62654">
    <property type="entry name" value="S62654"/>
</dbReference>
<dbReference type="PIR" id="S68223">
    <property type="entry name" value="S68223"/>
</dbReference>
<dbReference type="PIR" id="T52565">
    <property type="entry name" value="T52565"/>
</dbReference>
<dbReference type="RefSeq" id="NP_568495.2">
    <property type="nucleotide sequence ID" value="NM_122620.4"/>
</dbReference>
<dbReference type="SMR" id="P46416"/>
<dbReference type="BioGRID" id="18071">
    <property type="interactions" value="3"/>
</dbReference>
<dbReference type="FunCoup" id="P46416">
    <property type="interactions" value="4682"/>
</dbReference>
<dbReference type="STRING" id="3702.P46416"/>
<dbReference type="iPTMnet" id="P46416"/>
<dbReference type="PaxDb" id="3702-AT5G27380.1"/>
<dbReference type="ProteomicsDB" id="222360"/>
<dbReference type="EnsemblPlants" id="AT5G27380.1">
    <property type="protein sequence ID" value="AT5G27380.1"/>
    <property type="gene ID" value="AT5G27380"/>
</dbReference>
<dbReference type="GeneID" id="832797"/>
<dbReference type="Gramene" id="AT5G27380.1">
    <property type="protein sequence ID" value="AT5G27380.1"/>
    <property type="gene ID" value="AT5G27380"/>
</dbReference>
<dbReference type="KEGG" id="ath:AT5G27380"/>
<dbReference type="Araport" id="AT5G27380"/>
<dbReference type="TAIR" id="AT5G27380">
    <property type="gene designation" value="GSH2"/>
</dbReference>
<dbReference type="eggNOG" id="KOG0021">
    <property type="taxonomic scope" value="Eukaryota"/>
</dbReference>
<dbReference type="HOGENOM" id="CLU_025152_3_0_1"/>
<dbReference type="InParanoid" id="P46416"/>
<dbReference type="OMA" id="NGLVMYP"/>
<dbReference type="PhylomeDB" id="P46416"/>
<dbReference type="BioCyc" id="ARA:AT5G27380-MONOMER"/>
<dbReference type="BRENDA" id="6.3.2.3">
    <property type="organism ID" value="399"/>
</dbReference>
<dbReference type="UniPathway" id="UPA00142">
    <property type="reaction ID" value="UER00210"/>
</dbReference>
<dbReference type="PRO" id="PR:P46416"/>
<dbReference type="Proteomes" id="UP000006548">
    <property type="component" value="Chromosome 5"/>
</dbReference>
<dbReference type="ExpressionAtlas" id="P46416">
    <property type="expression patterns" value="baseline and differential"/>
</dbReference>
<dbReference type="GO" id="GO:0009507">
    <property type="term" value="C:chloroplast"/>
    <property type="evidence" value="ECO:0000314"/>
    <property type="project" value="TAIR"/>
</dbReference>
<dbReference type="GO" id="GO:0005829">
    <property type="term" value="C:cytosol"/>
    <property type="evidence" value="ECO:0000314"/>
    <property type="project" value="TAIR"/>
</dbReference>
<dbReference type="GO" id="GO:0009536">
    <property type="term" value="C:plastid"/>
    <property type="evidence" value="ECO:0007005"/>
    <property type="project" value="TAIR"/>
</dbReference>
<dbReference type="GO" id="GO:0005524">
    <property type="term" value="F:ATP binding"/>
    <property type="evidence" value="ECO:0000250"/>
    <property type="project" value="UniProtKB"/>
</dbReference>
<dbReference type="GO" id="GO:0043295">
    <property type="term" value="F:glutathione binding"/>
    <property type="evidence" value="ECO:0000250"/>
    <property type="project" value="UniProtKB"/>
</dbReference>
<dbReference type="GO" id="GO:0004363">
    <property type="term" value="F:glutathione synthase activity"/>
    <property type="evidence" value="ECO:0000314"/>
    <property type="project" value="TAIR"/>
</dbReference>
<dbReference type="GO" id="GO:0000287">
    <property type="term" value="F:magnesium ion binding"/>
    <property type="evidence" value="ECO:0000250"/>
    <property type="project" value="UniProtKB"/>
</dbReference>
<dbReference type="GO" id="GO:0042803">
    <property type="term" value="F:protein homodimerization activity"/>
    <property type="evidence" value="ECO:0000250"/>
    <property type="project" value="UniProtKB"/>
</dbReference>
<dbReference type="GO" id="GO:0006750">
    <property type="term" value="P:glutathione biosynthetic process"/>
    <property type="evidence" value="ECO:0000314"/>
    <property type="project" value="TAIR"/>
</dbReference>
<dbReference type="GO" id="GO:0009753">
    <property type="term" value="P:response to jasmonic acid"/>
    <property type="evidence" value="ECO:0000270"/>
    <property type="project" value="TAIR"/>
</dbReference>
<dbReference type="CDD" id="cd00228">
    <property type="entry name" value="eu-GS"/>
    <property type="match status" value="1"/>
</dbReference>
<dbReference type="FunFam" id="1.10.1080.10:FF:000005">
    <property type="entry name" value="Glutathione synthetase"/>
    <property type="match status" value="1"/>
</dbReference>
<dbReference type="FunFam" id="3.30.1490.50:FF:000001">
    <property type="entry name" value="Glutathione synthetase"/>
    <property type="match status" value="1"/>
</dbReference>
<dbReference type="FunFam" id="3.30.1490.80:FF:000010">
    <property type="entry name" value="Glutathione synthetase"/>
    <property type="match status" value="1"/>
</dbReference>
<dbReference type="FunFam" id="3.40.50.1760:FF:000002">
    <property type="entry name" value="Glutathione synthetase"/>
    <property type="match status" value="1"/>
</dbReference>
<dbReference type="Gene3D" id="3.30.1490.50">
    <property type="match status" value="1"/>
</dbReference>
<dbReference type="Gene3D" id="3.30.1490.80">
    <property type="match status" value="1"/>
</dbReference>
<dbReference type="Gene3D" id="3.30.470.20">
    <property type="entry name" value="ATP-grasp fold, B domain"/>
    <property type="match status" value="2"/>
</dbReference>
<dbReference type="Gene3D" id="3.40.50.1760">
    <property type="entry name" value="Glutathione synthase, substrate-binding domain superfamily, eukaryotic"/>
    <property type="match status" value="1"/>
</dbReference>
<dbReference type="Gene3D" id="1.10.1080.10">
    <property type="entry name" value="Glutathione Synthetase, Chain A, domain 3"/>
    <property type="match status" value="1"/>
</dbReference>
<dbReference type="InterPro" id="IPR005615">
    <property type="entry name" value="Glutathione_synthase"/>
</dbReference>
<dbReference type="InterPro" id="IPR014042">
    <property type="entry name" value="Glutathione_synthase_a-hlx"/>
</dbReference>
<dbReference type="InterPro" id="IPR014709">
    <property type="entry name" value="Glutathione_synthase_C_euk"/>
</dbReference>
<dbReference type="InterPro" id="IPR014049">
    <property type="entry name" value="Glutathione_synthase_N_euk"/>
</dbReference>
<dbReference type="InterPro" id="IPR037013">
    <property type="entry name" value="GSH-S_sub-bd_sf"/>
</dbReference>
<dbReference type="InterPro" id="IPR004887">
    <property type="entry name" value="GSH_synth_subst-bd"/>
</dbReference>
<dbReference type="InterPro" id="IPR016185">
    <property type="entry name" value="PreATP-grasp_dom_sf"/>
</dbReference>
<dbReference type="NCBIfam" id="TIGR01986">
    <property type="entry name" value="glut_syn_euk"/>
    <property type="match status" value="1"/>
</dbReference>
<dbReference type="PANTHER" id="PTHR11130">
    <property type="entry name" value="GLUTATHIONE SYNTHETASE"/>
    <property type="match status" value="1"/>
</dbReference>
<dbReference type="PANTHER" id="PTHR11130:SF0">
    <property type="entry name" value="GLUTATHIONE SYNTHETASE"/>
    <property type="match status" value="1"/>
</dbReference>
<dbReference type="Pfam" id="PF03917">
    <property type="entry name" value="GSH_synth_ATP"/>
    <property type="match status" value="1"/>
</dbReference>
<dbReference type="Pfam" id="PF03199">
    <property type="entry name" value="GSH_synthase"/>
    <property type="match status" value="1"/>
</dbReference>
<dbReference type="PIRSF" id="PIRSF001558">
    <property type="entry name" value="GSHase"/>
    <property type="match status" value="1"/>
</dbReference>
<dbReference type="SUPFAM" id="SSF56059">
    <property type="entry name" value="Glutathione synthetase ATP-binding domain-like"/>
    <property type="match status" value="1"/>
</dbReference>
<dbReference type="SUPFAM" id="SSF52440">
    <property type="entry name" value="PreATP-grasp domain"/>
    <property type="match status" value="1"/>
</dbReference>
<sequence length="539" mass="60271">MGSGCSSLSYSSSSTCNATVFSISSSPSSSSSLKLNPSSFLFQNPKTLRNQSPLRCGRSFKMESQKPIFDLEKLDDEFVQKLVYDALVWSSLHGLVVGDKSYQKSGNVPGVGLMHAPIALLPTAFPEAYWKQACNVTPLFNELIDRVSLDGKFLQDSLSRTKKVDVFTSRLLDIHSKMLERNKKEDIRLGLHRFDYMLDEETNSLLQIEMNTISCSFPGLSRLVSQLHQSLLRSYGDQIGIDSERVPINTSTIQFADALAKAWLEYSNPRAVVMVIVQPEERNMYDQHLLSSILREKHNIVVIRKTLAEVEKEGSVQEDETLIVGGQAVAVVYFRSGYTPNDHPSESEWNARLLIEESSAVKCPSIAYHLTGSKKIQQELAKPGVLERFLDNKEDIAKLRKCFAGLWSLDDSEIVKQAIEKPGLFVMKPQREGGGNNIYGDDVRENLLRLQKEGEEGNAAYILMQRIFPKVSNMFLVREGVYHKHQAISELGVYGAYLRSKDEVIVNEQSGYLMRTKIASSDEGGVAAGFGVLDSIYLI</sequence>
<proteinExistence type="evidence at transcript level"/>
<gene>
    <name type="primary">GSH2</name>
    <name type="synonym">GSHII</name>
    <name type="ordered locus">At5g27380</name>
    <name type="ORF">F21A20_90</name>
</gene>
<keyword id="KW-0067">ATP-binding</keyword>
<keyword id="KW-0150">Chloroplast</keyword>
<keyword id="KW-0317">Glutathione biosynthesis</keyword>
<keyword id="KW-0436">Ligase</keyword>
<keyword id="KW-0460">Magnesium</keyword>
<keyword id="KW-0479">Metal-binding</keyword>
<keyword id="KW-0547">Nucleotide-binding</keyword>
<keyword id="KW-0934">Plastid</keyword>
<keyword id="KW-1185">Reference proteome</keyword>
<keyword id="KW-0809">Transit peptide</keyword>
<organism>
    <name type="scientific">Arabidopsis thaliana</name>
    <name type="common">Mouse-ear cress</name>
    <dbReference type="NCBI Taxonomy" id="3702"/>
    <lineage>
        <taxon>Eukaryota</taxon>
        <taxon>Viridiplantae</taxon>
        <taxon>Streptophyta</taxon>
        <taxon>Embryophyta</taxon>
        <taxon>Tracheophyta</taxon>
        <taxon>Spermatophyta</taxon>
        <taxon>Magnoliopsida</taxon>
        <taxon>eudicotyledons</taxon>
        <taxon>Gunneridae</taxon>
        <taxon>Pentapetalae</taxon>
        <taxon>rosids</taxon>
        <taxon>malvids</taxon>
        <taxon>Brassicales</taxon>
        <taxon>Brassicaceae</taxon>
        <taxon>Camelineae</taxon>
        <taxon>Arabidopsis</taxon>
    </lineage>
</organism>
<evidence type="ECO:0000250" key="1"/>
<evidence type="ECO:0000255" key="2"/>
<evidence type="ECO:0000305" key="3"/>